<evidence type="ECO:0000250" key="1">
    <source>
        <dbReference type="UniProtKB" id="P00423"/>
    </source>
</evidence>
<evidence type="ECO:0000250" key="2">
    <source>
        <dbReference type="UniProtKB" id="P00424"/>
    </source>
</evidence>
<evidence type="ECO:0000250" key="3">
    <source>
        <dbReference type="UniProtKB" id="P13073"/>
    </source>
</evidence>
<evidence type="ECO:0000250" key="4">
    <source>
        <dbReference type="UniProtKB" id="P19783"/>
    </source>
</evidence>
<evidence type="ECO:0000269" key="5">
    <source>
    </source>
</evidence>
<evidence type="ECO:0000269" key="6">
    <source>
    </source>
</evidence>
<evidence type="ECO:0000305" key="7"/>
<evidence type="ECO:0007744" key="8">
    <source>
    </source>
</evidence>
<sequence>MLATRALSLIGKRAISTSVCLRAHGSVVKSEDYALPSYVDRRDYPLPDVAHVKLLSASQKALKEKEKADWSSLSRDEKVQLYRIQFNESFAEMNKGTNEWKTVVGLAMFFIGFTALVLIWEKSYVYGPIPHTFDRDWVAMQTKRMLDMKVNPIQGFSAKWDYNKNEWKK</sequence>
<gene>
    <name type="primary">Cox4i1</name>
    <name type="synonym">Cox4</name>
    <name type="synonym">Cox4a</name>
</gene>
<keyword id="KW-0007">Acetylation</keyword>
<keyword id="KW-0903">Direct protein sequencing</keyword>
<keyword id="KW-0472">Membrane</keyword>
<keyword id="KW-0496">Mitochondrion</keyword>
<keyword id="KW-0999">Mitochondrion inner membrane</keyword>
<keyword id="KW-0597">Phosphoprotein</keyword>
<keyword id="KW-1185">Reference proteome</keyword>
<keyword id="KW-0809">Transit peptide</keyword>
<keyword id="KW-0812">Transmembrane</keyword>
<keyword id="KW-1133">Transmembrane helix</keyword>
<reference key="1">
    <citation type="journal article" date="1989" name="Nucleic Acids Res.">
        <title>Nucleotide sequence of cDNA for rat brain and liver cytochrome c oxidase subunit IV.</title>
        <authorList>
            <person name="Goto Y."/>
            <person name="Amuro N."/>
            <person name="Okazaki T."/>
        </authorList>
    </citation>
    <scope>NUCLEOTIDE SEQUENCE [MRNA]</scope>
    <source>
        <strain>Sprague-Dawley</strain>
        <tissue>Brain</tissue>
    </source>
</reference>
<reference key="2">
    <citation type="journal article" date="1989" name="Nucleic Acids Res.">
        <title>Nucleotide sequence of cDNA encoding subunit IV of cytochrome c oxidase from fetal rat liver.</title>
        <authorList>
            <person name="Gopalan G."/>
            <person name="Droste M."/>
            <person name="Kadenbach B."/>
        </authorList>
    </citation>
    <scope>NUCLEOTIDE SEQUENCE [MRNA]</scope>
    <source>
        <strain>Wistar</strain>
        <tissue>Liver</tissue>
    </source>
</reference>
<reference key="3">
    <citation type="journal article" date="1990" name="J. Biol. Chem.">
        <title>Structural organization of the rat cytochrome c oxidase subunit IV gene.</title>
        <authorList>
            <person name="Yamada M."/>
            <person name="Amuro N."/>
            <person name="Goto Y."/>
            <person name="Okazaki T."/>
        </authorList>
    </citation>
    <scope>NUCLEOTIDE SEQUENCE [GENOMIC DNA]</scope>
</reference>
<reference key="4">
    <citation type="journal article" date="1990" name="Nucleic Acids Res.">
        <title>Complete nucleotide sequence of the gene encoding rat cytochrome c oxidase subunit IV.</title>
        <authorList>
            <person name="Amuro N."/>
            <person name="Yamada M."/>
            <person name="Goto Y."/>
            <person name="Okazaki T."/>
        </authorList>
    </citation>
    <scope>NUCLEOTIDE SEQUENCE [GENOMIC DNA]</scope>
</reference>
<reference key="5">
    <citation type="journal article" date="1990" name="Nucleic Acids Res.">
        <title>The rat cytochrome c oxidase subunit IV gene family: tissue-specific and hormonal differences in subunit IV and cytochrome c mRNA expression.</title>
        <authorList>
            <person name="Virbasius J.V."/>
            <person name="Scarpulla R.C."/>
        </authorList>
    </citation>
    <scope>NUCLEOTIDE SEQUENCE [GENOMIC DNA]</scope>
</reference>
<reference key="6">
    <citation type="journal article" date="2004" name="Genome Res.">
        <title>The status, quality, and expansion of the NIH full-length cDNA project: the Mammalian Gene Collection (MGC).</title>
        <authorList>
            <consortium name="The MGC Project Team"/>
        </authorList>
    </citation>
    <scope>NUCLEOTIDE SEQUENCE [LARGE SCALE MRNA]</scope>
    <source>
        <tissue>Brain</tissue>
    </source>
</reference>
<reference key="7">
    <citation type="journal article" date="1995" name="Eur. J. Biochem.">
        <title>Cytochrome-c oxidase in developing rat heart. Enzymic properties and amino-terminal sequences suggest identity of the fetal heart and the adult liver isoform.</title>
        <authorList>
            <person name="Schaegger H."/>
            <person name="Noack H."/>
            <person name="Halangk W."/>
            <person name="Brandt U."/>
            <person name="von Jagow G."/>
        </authorList>
    </citation>
    <scope>PROTEIN SEQUENCE OF 23-32</scope>
    <source>
        <strain>Wistar</strain>
        <tissue>Liver</tissue>
    </source>
</reference>
<reference key="8">
    <citation type="submission" date="2007-07" db="UniProtKB">
        <authorList>
            <person name="Lubec G."/>
            <person name="Kang S.U."/>
        </authorList>
    </citation>
    <scope>PROTEIN SEQUENCE OF 68-75 AND 150-159</scope>
    <scope>IDENTIFICATION BY MASS SPECTROMETRY</scope>
    <source>
        <strain>Sprague-Dawley</strain>
        <tissue>Brain</tissue>
    </source>
</reference>
<reference key="9">
    <citation type="journal article" date="2012" name="Nat. Commun.">
        <title>Quantitative maps of protein phosphorylation sites across 14 different rat organs and tissues.</title>
        <authorList>
            <person name="Lundby A."/>
            <person name="Secher A."/>
            <person name="Lage K."/>
            <person name="Nordsborg N.B."/>
            <person name="Dmytriyev A."/>
            <person name="Lundby C."/>
            <person name="Olsen J.V."/>
        </authorList>
    </citation>
    <scope>PHOSPHORYLATION [LARGE SCALE ANALYSIS] AT SER-56 AND SER-58</scope>
    <scope>IDENTIFICATION BY MASS SPECTROMETRY [LARGE SCALE ANALYSIS]</scope>
</reference>
<reference key="10">
    <citation type="journal article" date="2019" name="Sci. Rep.">
        <title>Chronic Pressure Overload Results in Deficiency of Mitochondrial Membrane Transporter ABCB7 Which Contributes to Iron Overload, Mitochondrial Dysfunction, Metabolic Shift and Worsens Cardiac Function.</title>
        <authorList>
            <person name="Kumar V."/>
            <person name="Kumar A."/>
            <person name="Sanawar R."/>
            <person name="Jaleel A."/>
            <person name="Santhosh Kumar T.R."/>
            <person name="Kartha C.C."/>
        </authorList>
    </citation>
    <scope>INTERACTION WITH ABCB7</scope>
</reference>
<protein>
    <recommendedName>
        <fullName>Cytochrome c oxidase subunit 4 isoform 1, mitochondrial</fullName>
    </recommendedName>
    <alternativeName>
        <fullName>Cytochrome c oxidase polypeptide IV</fullName>
    </alternativeName>
    <alternativeName>
        <fullName>Cytochrome c oxidase subunit IV isoform 1</fullName>
        <shortName>COX IV-1</shortName>
    </alternativeName>
</protein>
<comment type="function">
    <text evidence="2">Component of the cytochrome c oxidase, the last enzyme in the mitochondrial electron transport chain which drives oxidative phosphorylation. The respiratory chain contains 3 multisubunit complexes succinate dehydrogenase (complex II, CII), ubiquinol-cytochrome c oxidoreductase (cytochrome b-c1 complex, complex III, CIII) and cytochrome c oxidase (complex IV, CIV), that cooperate to transfer electrons derived from NADH and succinate to molecular oxygen, creating an electrochemical gradient over the inner membrane that drives transmembrane transport and the ATP synthase. Cytochrome c oxidase is the component of the respiratory chain that catalyzes the reduction of oxygen to water. Electrons originating from reduced cytochrome c in the intermembrane space (IMS) are transferred via the dinuclear copper A center (CU(A)) of subunit 2 and heme A of subunit 1 to the active site in subunit 1, a binuclear center (BNC) formed by heme A3 and copper B (CU(B)). The BNC reduces molecular oxygen to 2 water molecules using 4 electrons from cytochrome c in the IMS and 4 protons from the mitochondrial matrix.</text>
</comment>
<comment type="pathway">
    <text evidence="2">Energy metabolism; oxidative phosphorylation.</text>
</comment>
<comment type="subunit">
    <text evidence="1 3 4 5">Component of the cytochrome c oxidase (complex IV, CIV), a multisubunit enzyme composed of 14 subunits. The complex is composed of a catalytic core of 3 subunits MT-CO1, MT-CO2 and MT-CO3, encoded in the mitochondrial DNA, and 11 supernumerary subunits COX4I, COX5A, COX5B, COX6A, COX6B, COX6C, COX7A, COX7B, COX7C, COX8 and NDUFA4, which are encoded in the nuclear genome. The complex exists as a monomer or a dimer and forms supercomplexes (SCs) in the inner mitochondrial membrane with NADH-ubiquinone oxidoreductase (complex I, CI) and ubiquinol-cytochrome c oxidoreductase (cytochrome b-c1 complex, complex III, CIII), resulting in different assemblies (supercomplex SCI(1)III(2)IV(1) and megacomplex MCI(2)III(2)IV(2)) (By similarity). Interacts with PHB2; the interaction decreases in absence of SPHK2 (By similarity). Interacts with AFG1L (By similarity). Interacts with ABCB7; this interaction allows the regulation of cellular iron homeostasis and cellular reactive oxygen species (ROS) levels in cardiomyocytes (PubMed:31511561). Interacts with FLVCR2; this interaction occurs in the absence of heme and is disrupted upon heme binding. Interacts with IRGC (By similarity).</text>
</comment>
<comment type="subcellular location">
    <subcellularLocation>
        <location evidence="1">Mitochondrion inner membrane</location>
        <topology evidence="1">Single-pass membrane protein</topology>
    </subcellularLocation>
</comment>
<comment type="similarity">
    <text evidence="7">Belongs to the cytochrome c oxidase IV family.</text>
</comment>
<proteinExistence type="evidence at protein level"/>
<name>COX41_RAT</name>
<feature type="transit peptide" description="Mitochondrion" evidence="6">
    <location>
        <begin position="1"/>
        <end position="22"/>
    </location>
</feature>
<feature type="chain" id="PRO_0000006088" description="Cytochrome c oxidase subunit 4 isoform 1, mitochondrial">
    <location>
        <begin position="23"/>
        <end position="169"/>
    </location>
</feature>
<feature type="topological domain" description="Mitochondrial matrix" evidence="1">
    <location>
        <begin position="23"/>
        <end position="98"/>
    </location>
</feature>
<feature type="transmembrane region" description="Helical" evidence="1">
    <location>
        <begin position="99"/>
        <end position="124"/>
    </location>
</feature>
<feature type="topological domain" description="Mitochondrial intermembrane" evidence="1">
    <location>
        <begin position="125"/>
        <end position="169"/>
    </location>
</feature>
<feature type="modified residue" description="N6-acetyllysine; alternate" evidence="4">
    <location>
        <position position="29"/>
    </location>
</feature>
<feature type="modified residue" description="N6-succinyllysine; alternate" evidence="4">
    <location>
        <position position="29"/>
    </location>
</feature>
<feature type="modified residue" description="N6-acetyllysine" evidence="3">
    <location>
        <position position="53"/>
    </location>
</feature>
<feature type="modified residue" description="Phosphoserine" evidence="8">
    <location>
        <position position="56"/>
    </location>
</feature>
<feature type="modified residue" description="Phosphoserine" evidence="8">
    <location>
        <position position="58"/>
    </location>
</feature>
<feature type="modified residue" description="N6-acetyllysine; alternate" evidence="3">
    <location>
        <position position="60"/>
    </location>
</feature>
<feature type="modified residue" description="N6-succinyllysine; alternate" evidence="4">
    <location>
        <position position="60"/>
    </location>
</feature>
<feature type="modified residue" description="N6-acetyllysine" evidence="4">
    <location>
        <position position="67"/>
    </location>
</feature>
<dbReference type="EMBL" id="X14209">
    <property type="protein sequence ID" value="CAA32426.1"/>
    <property type="molecule type" value="mRNA"/>
</dbReference>
<dbReference type="EMBL" id="X15029">
    <property type="protein sequence ID" value="CAA33133.1"/>
    <property type="molecule type" value="mRNA"/>
</dbReference>
<dbReference type="EMBL" id="J05425">
    <property type="protein sequence ID" value="AAA40949.1"/>
    <property type="molecule type" value="Genomic_DNA"/>
</dbReference>
<dbReference type="EMBL" id="X54081">
    <property type="protein sequence ID" value="CAA38018.1"/>
    <property type="molecule type" value="Genomic_DNA"/>
</dbReference>
<dbReference type="EMBL" id="BC084719">
    <property type="protein sequence ID" value="AAH84719.1"/>
    <property type="molecule type" value="mRNA"/>
</dbReference>
<dbReference type="PIR" id="A35209">
    <property type="entry name" value="A35209"/>
</dbReference>
<dbReference type="PIR" id="S65374">
    <property type="entry name" value="S65374"/>
</dbReference>
<dbReference type="RefSeq" id="NP_058898.1">
    <property type="nucleotide sequence ID" value="NM_017202.1"/>
</dbReference>
<dbReference type="SMR" id="P10888"/>
<dbReference type="BioGRID" id="248090">
    <property type="interactions" value="4"/>
</dbReference>
<dbReference type="CORUM" id="P10888"/>
<dbReference type="FunCoup" id="P10888">
    <property type="interactions" value="1695"/>
</dbReference>
<dbReference type="IntAct" id="P10888">
    <property type="interactions" value="2"/>
</dbReference>
<dbReference type="MINT" id="P10888"/>
<dbReference type="STRING" id="10116.ENSRNOP00000024033"/>
<dbReference type="CarbonylDB" id="P10888"/>
<dbReference type="GlyGen" id="P10888">
    <property type="glycosylation" value="3 sites, 1 O-linked glycan (3 sites)"/>
</dbReference>
<dbReference type="iPTMnet" id="P10888"/>
<dbReference type="PhosphoSitePlus" id="P10888"/>
<dbReference type="SwissPalm" id="P10888"/>
<dbReference type="jPOST" id="P10888"/>
<dbReference type="PaxDb" id="10116-ENSRNOP00000024033"/>
<dbReference type="DNASU" id="29445"/>
<dbReference type="GeneID" id="29445"/>
<dbReference type="KEGG" id="rno:29445"/>
<dbReference type="UCSC" id="RGD:68374">
    <property type="organism name" value="rat"/>
</dbReference>
<dbReference type="AGR" id="RGD:68374"/>
<dbReference type="CTD" id="1327"/>
<dbReference type="RGD" id="68374">
    <property type="gene designation" value="Cox4i1"/>
</dbReference>
<dbReference type="VEuPathDB" id="HostDB:ENSRNOG00000017817"/>
<dbReference type="eggNOG" id="KOG4075">
    <property type="taxonomic scope" value="Eukaryota"/>
</dbReference>
<dbReference type="HOGENOM" id="CLU_117340_1_0_1"/>
<dbReference type="InParanoid" id="P10888"/>
<dbReference type="OrthoDB" id="8670at9989"/>
<dbReference type="PhylomeDB" id="P10888"/>
<dbReference type="TreeFam" id="TF105061"/>
<dbReference type="Reactome" id="R-RNO-5628897">
    <property type="pathway name" value="TP53 Regulates Metabolic Genes"/>
</dbReference>
<dbReference type="Reactome" id="R-RNO-611105">
    <property type="pathway name" value="Respiratory electron transport"/>
</dbReference>
<dbReference type="Reactome" id="R-RNO-9707564">
    <property type="pathway name" value="Cytoprotection by HMOX1"/>
</dbReference>
<dbReference type="Reactome" id="R-RNO-9864848">
    <property type="pathway name" value="Complex IV assembly"/>
</dbReference>
<dbReference type="UniPathway" id="UPA00705"/>
<dbReference type="PRO" id="PR:P10888"/>
<dbReference type="Proteomes" id="UP000002494">
    <property type="component" value="Chromosome 19"/>
</dbReference>
<dbReference type="Bgee" id="ENSRNOG00000017817">
    <property type="expression patterns" value="Expressed in heart and 20 other cell types or tissues"/>
</dbReference>
<dbReference type="GO" id="GO:0005829">
    <property type="term" value="C:cytosol"/>
    <property type="evidence" value="ECO:0000266"/>
    <property type="project" value="RGD"/>
</dbReference>
<dbReference type="GO" id="GO:0005743">
    <property type="term" value="C:mitochondrial inner membrane"/>
    <property type="evidence" value="ECO:0000250"/>
    <property type="project" value="UniProtKB"/>
</dbReference>
<dbReference type="GO" id="GO:0031966">
    <property type="term" value="C:mitochondrial membrane"/>
    <property type="evidence" value="ECO:0000266"/>
    <property type="project" value="RGD"/>
</dbReference>
<dbReference type="GO" id="GO:0005739">
    <property type="term" value="C:mitochondrion"/>
    <property type="evidence" value="ECO:0000266"/>
    <property type="project" value="RGD"/>
</dbReference>
<dbReference type="GO" id="GO:0005654">
    <property type="term" value="C:nucleoplasm"/>
    <property type="evidence" value="ECO:0007669"/>
    <property type="project" value="Ensembl"/>
</dbReference>
<dbReference type="GO" id="GO:0045277">
    <property type="term" value="C:respiratory chain complex IV"/>
    <property type="evidence" value="ECO:0000266"/>
    <property type="project" value="RGD"/>
</dbReference>
<dbReference type="GO" id="GO:0006123">
    <property type="term" value="P:mitochondrial electron transport, cytochrome c to oxygen"/>
    <property type="evidence" value="ECO:0000318"/>
    <property type="project" value="GO_Central"/>
</dbReference>
<dbReference type="GO" id="GO:0007584">
    <property type="term" value="P:response to nutrient"/>
    <property type="evidence" value="ECO:0000270"/>
    <property type="project" value="RGD"/>
</dbReference>
<dbReference type="CDD" id="cd00922">
    <property type="entry name" value="Cyt_c_Oxidase_IV"/>
    <property type="match status" value="1"/>
</dbReference>
<dbReference type="FunFam" id="1.10.442.10:FF:000001">
    <property type="entry name" value="Cytochrome c oxidase subunit 4 isoform 1"/>
    <property type="match status" value="1"/>
</dbReference>
<dbReference type="Gene3D" id="1.10.442.10">
    <property type="entry name" value="Cytochrome c oxidase subunit IV"/>
    <property type="match status" value="1"/>
</dbReference>
<dbReference type="InterPro" id="IPR013288">
    <property type="entry name" value="Cyt_c_oxidase_su4"/>
</dbReference>
<dbReference type="InterPro" id="IPR004203">
    <property type="entry name" value="Cyt_c_oxidase_su4_fam"/>
</dbReference>
<dbReference type="InterPro" id="IPR036639">
    <property type="entry name" value="Cyt_c_oxidase_su4_sf"/>
</dbReference>
<dbReference type="PANTHER" id="PTHR10707:SF12">
    <property type="entry name" value="CYTOCHROME C OXIDASE SUBUNIT 4 ISOFORM 1, MITOCHONDRIAL"/>
    <property type="match status" value="1"/>
</dbReference>
<dbReference type="PANTHER" id="PTHR10707">
    <property type="entry name" value="CYTOCHROME C OXIDASE SUBUNIT IV"/>
    <property type="match status" value="1"/>
</dbReference>
<dbReference type="Pfam" id="PF02936">
    <property type="entry name" value="COX4"/>
    <property type="match status" value="1"/>
</dbReference>
<dbReference type="PRINTS" id="PR01873">
    <property type="entry name" value="CYTCOXIDASE4"/>
</dbReference>
<dbReference type="SUPFAM" id="SSF81406">
    <property type="entry name" value="Mitochondrial cytochrome c oxidase subunit IV"/>
    <property type="match status" value="1"/>
</dbReference>
<accession>P10888</accession>
<organism>
    <name type="scientific">Rattus norvegicus</name>
    <name type="common">Rat</name>
    <dbReference type="NCBI Taxonomy" id="10116"/>
    <lineage>
        <taxon>Eukaryota</taxon>
        <taxon>Metazoa</taxon>
        <taxon>Chordata</taxon>
        <taxon>Craniata</taxon>
        <taxon>Vertebrata</taxon>
        <taxon>Euteleostomi</taxon>
        <taxon>Mammalia</taxon>
        <taxon>Eutheria</taxon>
        <taxon>Euarchontoglires</taxon>
        <taxon>Glires</taxon>
        <taxon>Rodentia</taxon>
        <taxon>Myomorpha</taxon>
        <taxon>Muroidea</taxon>
        <taxon>Muridae</taxon>
        <taxon>Murinae</taxon>
        <taxon>Rattus</taxon>
    </lineage>
</organism>